<protein>
    <recommendedName>
        <fullName>Indolepyruvate oxidoreductase subunit IorA</fullName>
        <shortName>IOR</shortName>
        <ecNumber>1.2.7.8</ecNumber>
    </recommendedName>
    <alternativeName>
        <fullName>Indolepyruvate ferredoxin oxidoreductase subunit alpha</fullName>
    </alternativeName>
</protein>
<comment type="function">
    <text evidence="1">Catalyzes the ferredoxin-dependent oxidative decarboxylation of arylpyruvates.</text>
</comment>
<comment type="catalytic activity">
    <reaction>
        <text>indole-3-pyruvate + 2 oxidized [2Fe-2S]-[ferredoxin] + CoA = (indol-3-yl)acetyl-CoA + 2 reduced [2Fe-2S]-[ferredoxin] + CO2 + H(+)</text>
        <dbReference type="Rhea" id="RHEA:12645"/>
        <dbReference type="Rhea" id="RHEA-COMP:10000"/>
        <dbReference type="Rhea" id="RHEA-COMP:10001"/>
        <dbReference type="ChEBI" id="CHEBI:15378"/>
        <dbReference type="ChEBI" id="CHEBI:16526"/>
        <dbReference type="ChEBI" id="CHEBI:17640"/>
        <dbReference type="ChEBI" id="CHEBI:33737"/>
        <dbReference type="ChEBI" id="CHEBI:33738"/>
        <dbReference type="ChEBI" id="CHEBI:57271"/>
        <dbReference type="ChEBI" id="CHEBI:57287"/>
        <dbReference type="EC" id="1.2.7.8"/>
    </reaction>
</comment>
<comment type="cofactor">
    <cofactor evidence="2">
        <name>[4Fe-4S] cluster</name>
        <dbReference type="ChEBI" id="CHEBI:49883"/>
    </cofactor>
    <text evidence="2">Binds 2 [4Fe-4S] clusters. In this family the first cluster has a non-standard and varying [4Fe-4S] binding motif CX(2)CX(2)CX(4-5)CP.</text>
</comment>
<comment type="subunit">
    <text>Heterodimer of the IorA and IorB subunits.</text>
</comment>
<proteinExistence type="inferred from homology"/>
<name>IORA_ARCFU</name>
<gene>
    <name type="primary">iorA</name>
    <name type="ordered locus">AF_1489</name>
</gene>
<organism>
    <name type="scientific">Archaeoglobus fulgidus (strain ATCC 49558 / DSM 4304 / JCM 9628 / NBRC 100126 / VC-16)</name>
    <dbReference type="NCBI Taxonomy" id="224325"/>
    <lineage>
        <taxon>Archaea</taxon>
        <taxon>Methanobacteriati</taxon>
        <taxon>Methanobacteriota</taxon>
        <taxon>Archaeoglobi</taxon>
        <taxon>Archaeoglobales</taxon>
        <taxon>Archaeoglobaceae</taxon>
        <taxon>Archaeoglobus</taxon>
    </lineage>
</organism>
<feature type="chain" id="PRO_0000099925" description="Indolepyruvate oxidoreductase subunit IorA">
    <location>
        <begin position="1"/>
        <end position="623"/>
    </location>
</feature>
<feature type="domain" description="4Fe-4S ferredoxin-type" evidence="3">
    <location>
        <begin position="593"/>
        <end position="622"/>
    </location>
</feature>
<feature type="binding site" evidence="2">
    <location>
        <position position="573"/>
    </location>
    <ligand>
        <name>[4Fe-4S] cluster</name>
        <dbReference type="ChEBI" id="CHEBI:49883"/>
        <label>1</label>
    </ligand>
</feature>
<feature type="binding site" evidence="2">
    <location>
        <position position="576"/>
    </location>
    <ligand>
        <name>[4Fe-4S] cluster</name>
        <dbReference type="ChEBI" id="CHEBI:49883"/>
        <label>1</label>
    </ligand>
</feature>
<feature type="binding site" evidence="2">
    <location>
        <position position="579"/>
    </location>
    <ligand>
        <name>[4Fe-4S] cluster</name>
        <dbReference type="ChEBI" id="CHEBI:49883"/>
        <label>1</label>
    </ligand>
</feature>
<feature type="binding site" evidence="2">
    <location>
        <position position="585"/>
    </location>
    <ligand>
        <name>[4Fe-4S] cluster</name>
        <dbReference type="ChEBI" id="CHEBI:49883"/>
        <label>2</label>
    </ligand>
</feature>
<feature type="binding site" evidence="2">
    <location>
        <position position="602"/>
    </location>
    <ligand>
        <name>[4Fe-4S] cluster</name>
        <dbReference type="ChEBI" id="CHEBI:49883"/>
        <label>2</label>
    </ligand>
</feature>
<feature type="binding site" evidence="2">
    <location>
        <position position="605"/>
    </location>
    <ligand>
        <name>[4Fe-4S] cluster</name>
        <dbReference type="ChEBI" id="CHEBI:49883"/>
        <label>2</label>
    </ligand>
</feature>
<feature type="binding site" evidence="2">
    <location>
        <position position="608"/>
    </location>
    <ligand>
        <name>[4Fe-4S] cluster</name>
        <dbReference type="ChEBI" id="CHEBI:49883"/>
        <label>2</label>
    </ligand>
</feature>
<feature type="binding site" evidence="2">
    <location>
        <position position="612"/>
    </location>
    <ligand>
        <name>[4Fe-4S] cluster</name>
        <dbReference type="ChEBI" id="CHEBI:49883"/>
        <label>1</label>
    </ligand>
</feature>
<reference key="1">
    <citation type="journal article" date="1997" name="Nature">
        <title>The complete genome sequence of the hyperthermophilic, sulphate-reducing archaeon Archaeoglobus fulgidus.</title>
        <authorList>
            <person name="Klenk H.-P."/>
            <person name="Clayton R.A."/>
            <person name="Tomb J.-F."/>
            <person name="White O."/>
            <person name="Nelson K.E."/>
            <person name="Ketchum K.A."/>
            <person name="Dodson R.J."/>
            <person name="Gwinn M.L."/>
            <person name="Hickey E.K."/>
            <person name="Peterson J.D."/>
            <person name="Richardson D.L."/>
            <person name="Kerlavage A.R."/>
            <person name="Graham D.E."/>
            <person name="Kyrpides N.C."/>
            <person name="Fleischmann R.D."/>
            <person name="Quackenbush J."/>
            <person name="Lee N.H."/>
            <person name="Sutton G.G."/>
            <person name="Gill S.R."/>
            <person name="Kirkness E.F."/>
            <person name="Dougherty B.A."/>
            <person name="McKenney K."/>
            <person name="Adams M.D."/>
            <person name="Loftus B.J."/>
            <person name="Peterson S.N."/>
            <person name="Reich C.I."/>
            <person name="McNeil L.K."/>
            <person name="Badger J.H."/>
            <person name="Glodek A."/>
            <person name="Zhou L."/>
            <person name="Overbeek R."/>
            <person name="Gocayne J.D."/>
            <person name="Weidman J.F."/>
            <person name="McDonald L.A."/>
            <person name="Utterback T.R."/>
            <person name="Cotton M.D."/>
            <person name="Spriggs T."/>
            <person name="Artiach P."/>
            <person name="Kaine B.P."/>
            <person name="Sykes S.M."/>
            <person name="Sadow P.W."/>
            <person name="D'Andrea K.P."/>
            <person name="Bowman C."/>
            <person name="Fujii C."/>
            <person name="Garland S.A."/>
            <person name="Mason T.M."/>
            <person name="Olsen G.J."/>
            <person name="Fraser C.M."/>
            <person name="Smith H.O."/>
            <person name="Woese C.R."/>
            <person name="Venter J.C."/>
        </authorList>
    </citation>
    <scope>NUCLEOTIDE SEQUENCE [LARGE SCALE GENOMIC DNA]</scope>
    <source>
        <strain>ATCC 49558 / DSM 4304 / JCM 9628 / NBRC 100126 / VC-16</strain>
    </source>
</reference>
<keyword id="KW-0004">4Fe-4S</keyword>
<keyword id="KW-0249">Electron transport</keyword>
<keyword id="KW-0408">Iron</keyword>
<keyword id="KW-0411">Iron-sulfur</keyword>
<keyword id="KW-0479">Metal-binding</keyword>
<keyword id="KW-0560">Oxidoreductase</keyword>
<keyword id="KW-1185">Reference proteome</keyword>
<keyword id="KW-0813">Transport</keyword>
<accession>O28783</accession>
<evidence type="ECO:0000250" key="1"/>
<evidence type="ECO:0000250" key="2">
    <source>
        <dbReference type="UniProtKB" id="O07835"/>
    </source>
</evidence>
<evidence type="ECO:0000255" key="3">
    <source>
        <dbReference type="PROSITE-ProRule" id="PRU00711"/>
    </source>
</evidence>
<sequence>MLNDVVRDAEGEKVFLLGNEAIARGAIEAGIDVFAAYPGTPSSEIADTLSDACRLLRGKMDFYMEYSANEKVAFEVAVGASLAGKRAMATMKHVGVNVAADPLFSFAYVGARGGFVLVTADDPSMHSSQNEQDNRWYGKAAKLPVVEPSSVQEAKDYAKLCFDLSEKFGLPMILRSYTRLSHASGVVELGKIPEKEFSRVEWERHPETDVVLPAHARKLKPILLEKLEKIERYFNSSEMNWVDEGDGDVGIIACGLSYAYTKEALENLNLNLPVLKLSSMHPLPERLIENFVSQMKKVIVVEEVDPFVELHVRAMGLAEVYGKMNGYMPMNYEYNVGRVETGIAKALGIKPSRDYEGIVAESQKLAAKAPPRPPVLCPGCPHSASFYAIRRVVDELGDAALPSDIGCYTLGINKPLEGVDITICMGASVGVSNGLAHVLNNKIIATIGDSTFIHAGIPPLINAVYNHADFVLVILDNSTTGMTGHQPHPGTGFRGCGEAGKAVRIEDIVRGCGVEFVEVVNPYNVRKMVDVLRRALNHDGVAVVIARQPCAILWSRARRREGKIVTYKVTEDCTLCMECVNTFACPALIFDGEKVSIDQSLCVGCAVCAKICPNRAIKPAKSN</sequence>
<dbReference type="EC" id="1.2.7.8"/>
<dbReference type="EMBL" id="AE000782">
    <property type="protein sequence ID" value="AAB89760.1"/>
    <property type="molecule type" value="Genomic_DNA"/>
</dbReference>
<dbReference type="PIR" id="H69435">
    <property type="entry name" value="H69435"/>
</dbReference>
<dbReference type="RefSeq" id="WP_010878986.1">
    <property type="nucleotide sequence ID" value="NC_000917.1"/>
</dbReference>
<dbReference type="STRING" id="224325.AF_1489"/>
<dbReference type="PaxDb" id="224325-AF_1489"/>
<dbReference type="EnsemblBacteria" id="AAB89760">
    <property type="protein sequence ID" value="AAB89760"/>
    <property type="gene ID" value="AF_1489"/>
</dbReference>
<dbReference type="GeneID" id="24795236"/>
<dbReference type="KEGG" id="afu:AF_1489"/>
<dbReference type="eggNOG" id="arCOG01609">
    <property type="taxonomic scope" value="Archaea"/>
</dbReference>
<dbReference type="HOGENOM" id="CLU_017727_0_0_2"/>
<dbReference type="OrthoDB" id="19071at2157"/>
<dbReference type="PhylomeDB" id="O28783"/>
<dbReference type="Proteomes" id="UP000002199">
    <property type="component" value="Chromosome"/>
</dbReference>
<dbReference type="GO" id="GO:0051539">
    <property type="term" value="F:4 iron, 4 sulfur cluster binding"/>
    <property type="evidence" value="ECO:0007669"/>
    <property type="project" value="UniProtKB-KW"/>
</dbReference>
<dbReference type="GO" id="GO:0043805">
    <property type="term" value="F:indolepyruvate ferredoxin oxidoreductase activity"/>
    <property type="evidence" value="ECO:0007669"/>
    <property type="project" value="UniProtKB-EC"/>
</dbReference>
<dbReference type="GO" id="GO:0046872">
    <property type="term" value="F:metal ion binding"/>
    <property type="evidence" value="ECO:0007669"/>
    <property type="project" value="UniProtKB-KW"/>
</dbReference>
<dbReference type="GO" id="GO:0030976">
    <property type="term" value="F:thiamine pyrophosphate binding"/>
    <property type="evidence" value="ECO:0007669"/>
    <property type="project" value="InterPro"/>
</dbReference>
<dbReference type="GO" id="GO:0006082">
    <property type="term" value="P:organic acid metabolic process"/>
    <property type="evidence" value="ECO:0007669"/>
    <property type="project" value="UniProtKB-ARBA"/>
</dbReference>
<dbReference type="GO" id="GO:0044272">
    <property type="term" value="P:sulfur compound biosynthetic process"/>
    <property type="evidence" value="ECO:0007669"/>
    <property type="project" value="UniProtKB-ARBA"/>
</dbReference>
<dbReference type="CDD" id="cd02008">
    <property type="entry name" value="TPP_IOR_alpha"/>
    <property type="match status" value="1"/>
</dbReference>
<dbReference type="CDD" id="cd07034">
    <property type="entry name" value="TPP_PYR_PFOR_IOR-alpha_like"/>
    <property type="match status" value="1"/>
</dbReference>
<dbReference type="FunFam" id="3.40.50.970:FF:000039">
    <property type="entry name" value="Indolepyruvate oxidoreductase subunit IorA"/>
    <property type="match status" value="1"/>
</dbReference>
<dbReference type="Gene3D" id="3.30.70.20">
    <property type="match status" value="1"/>
</dbReference>
<dbReference type="Gene3D" id="3.40.50.920">
    <property type="match status" value="1"/>
</dbReference>
<dbReference type="Gene3D" id="3.40.50.970">
    <property type="match status" value="2"/>
</dbReference>
<dbReference type="InterPro" id="IPR017896">
    <property type="entry name" value="4Fe4S_Fe-S-bd"/>
</dbReference>
<dbReference type="InterPro" id="IPR017900">
    <property type="entry name" value="4Fe4S_Fe_S_CS"/>
</dbReference>
<dbReference type="InterPro" id="IPR045025">
    <property type="entry name" value="HACL1-like"/>
</dbReference>
<dbReference type="InterPro" id="IPR017721">
    <property type="entry name" value="IorA"/>
</dbReference>
<dbReference type="InterPro" id="IPR002880">
    <property type="entry name" value="Pyrv_Fd/Flavodoxin_OxRdtase_N"/>
</dbReference>
<dbReference type="InterPro" id="IPR029061">
    <property type="entry name" value="THDP-binding"/>
</dbReference>
<dbReference type="InterPro" id="IPR011766">
    <property type="entry name" value="TPP_enzyme_TPP-bd"/>
</dbReference>
<dbReference type="InterPro" id="IPR009014">
    <property type="entry name" value="Transketo_C/PFOR_II"/>
</dbReference>
<dbReference type="NCBIfam" id="TIGR03336">
    <property type="entry name" value="IOR_alpha"/>
    <property type="match status" value="1"/>
</dbReference>
<dbReference type="PANTHER" id="PTHR43710">
    <property type="entry name" value="2-HYDROXYACYL-COA LYASE"/>
    <property type="match status" value="1"/>
</dbReference>
<dbReference type="PANTHER" id="PTHR43710:SF7">
    <property type="entry name" value="INDOLEPYRUVATE OXIDOREDUCTASE SUBUNIT IORA"/>
    <property type="match status" value="1"/>
</dbReference>
<dbReference type="Pfam" id="PF00037">
    <property type="entry name" value="Fer4"/>
    <property type="match status" value="1"/>
</dbReference>
<dbReference type="Pfam" id="PF01855">
    <property type="entry name" value="POR_N"/>
    <property type="match status" value="1"/>
</dbReference>
<dbReference type="Pfam" id="PF02775">
    <property type="entry name" value="TPP_enzyme_C"/>
    <property type="match status" value="1"/>
</dbReference>
<dbReference type="PIRSF" id="PIRSF006439">
    <property type="entry name" value="Indolepyruvate_ferr_oxidored"/>
    <property type="match status" value="1"/>
</dbReference>
<dbReference type="SUPFAM" id="SSF54862">
    <property type="entry name" value="4Fe-4S ferredoxins"/>
    <property type="match status" value="1"/>
</dbReference>
<dbReference type="SUPFAM" id="SSF52518">
    <property type="entry name" value="Thiamin diphosphate-binding fold (THDP-binding)"/>
    <property type="match status" value="2"/>
</dbReference>
<dbReference type="SUPFAM" id="SSF52922">
    <property type="entry name" value="TK C-terminal domain-like"/>
    <property type="match status" value="1"/>
</dbReference>
<dbReference type="PROSITE" id="PS00198">
    <property type="entry name" value="4FE4S_FER_1"/>
    <property type="match status" value="1"/>
</dbReference>
<dbReference type="PROSITE" id="PS51379">
    <property type="entry name" value="4FE4S_FER_2"/>
    <property type="match status" value="1"/>
</dbReference>